<reference key="1">
    <citation type="journal article" date="2003" name="Proc. Natl. Acad. Sci. U.S.A.">
        <title>Complete genome sequence of the Q-fever pathogen, Coxiella burnetii.</title>
        <authorList>
            <person name="Seshadri R."/>
            <person name="Paulsen I.T."/>
            <person name="Eisen J.A."/>
            <person name="Read T.D."/>
            <person name="Nelson K.E."/>
            <person name="Nelson W.C."/>
            <person name="Ward N.L."/>
            <person name="Tettelin H."/>
            <person name="Davidsen T.M."/>
            <person name="Beanan M.J."/>
            <person name="DeBoy R.T."/>
            <person name="Daugherty S.C."/>
            <person name="Brinkac L.M."/>
            <person name="Madupu R."/>
            <person name="Dodson R.J."/>
            <person name="Khouri H.M."/>
            <person name="Lee K.H."/>
            <person name="Carty H.A."/>
            <person name="Scanlan D."/>
            <person name="Heinzen R.A."/>
            <person name="Thompson H.A."/>
            <person name="Samuel J.E."/>
            <person name="Fraser C.M."/>
            <person name="Heidelberg J.F."/>
        </authorList>
    </citation>
    <scope>NUCLEOTIDE SEQUENCE [LARGE SCALE GENOMIC DNA]</scope>
    <source>
        <strain>RSA 493 / Nine Mile phase I</strain>
    </source>
</reference>
<keyword id="KW-0548">Nucleotidyltransferase</keyword>
<keyword id="KW-1185">Reference proteome</keyword>
<keyword id="KW-0694">RNA-binding</keyword>
<keyword id="KW-0698">rRNA processing</keyword>
<keyword id="KW-0808">Transferase</keyword>
<keyword id="KW-0819">tRNA processing</keyword>
<keyword id="KW-0820">tRNA-binding</keyword>
<protein>
    <recommendedName>
        <fullName evidence="1">Ribonuclease PH</fullName>
        <shortName evidence="1">RNase PH</shortName>
        <ecNumber evidence="1">2.7.7.56</ecNumber>
    </recommendedName>
    <alternativeName>
        <fullName evidence="1">tRNA nucleotidyltransferase</fullName>
    </alternativeName>
</protein>
<comment type="function">
    <text evidence="1">Phosphorolytic 3'-5' exoribonuclease that plays an important role in tRNA 3'-end maturation. Removes nucleotide residues following the 3'-CCA terminus of tRNAs; can also add nucleotides to the ends of RNA molecules by using nucleoside diphosphates as substrates, but this may not be physiologically important. Probably plays a role in initiation of 16S rRNA degradation (leading to ribosome degradation) during starvation.</text>
</comment>
<comment type="catalytic activity">
    <reaction evidence="1">
        <text>tRNA(n+1) + phosphate = tRNA(n) + a ribonucleoside 5'-diphosphate</text>
        <dbReference type="Rhea" id="RHEA:10628"/>
        <dbReference type="Rhea" id="RHEA-COMP:17343"/>
        <dbReference type="Rhea" id="RHEA-COMP:17344"/>
        <dbReference type="ChEBI" id="CHEBI:43474"/>
        <dbReference type="ChEBI" id="CHEBI:57930"/>
        <dbReference type="ChEBI" id="CHEBI:173114"/>
        <dbReference type="EC" id="2.7.7.56"/>
    </reaction>
</comment>
<comment type="subunit">
    <text evidence="1">Homohexameric ring arranged as a trimer of dimers.</text>
</comment>
<comment type="similarity">
    <text evidence="1">Belongs to the RNase PH family.</text>
</comment>
<sequence>MIMRPSKRAANELRPLSFTTQFTRYAEGSVLVTLGNTKVICNASIVEGVPRFLKNSEQGWLTAEYGMLPRSTHSRMDREASRGKQGGRTVEIQRLIGRSLRAALDLKLLGPYTITIDCDVIQADGGTRTAAINGSCIAMIEALRHLQRKGILQTDPLKHKVAAVSVGIYKGVPVLDLDYAEDSNAHTDMNVVMTDNDAFIEIQGTAEGDAFHAKELDALINLARHGIKQIIEKQQEALS</sequence>
<gene>
    <name evidence="1" type="primary">rph</name>
    <name type="ordered locus">CBU_0299</name>
</gene>
<organism>
    <name type="scientific">Coxiella burnetii (strain RSA 493 / Nine Mile phase I)</name>
    <dbReference type="NCBI Taxonomy" id="227377"/>
    <lineage>
        <taxon>Bacteria</taxon>
        <taxon>Pseudomonadati</taxon>
        <taxon>Pseudomonadota</taxon>
        <taxon>Gammaproteobacteria</taxon>
        <taxon>Legionellales</taxon>
        <taxon>Coxiellaceae</taxon>
        <taxon>Coxiella</taxon>
    </lineage>
</organism>
<evidence type="ECO:0000255" key="1">
    <source>
        <dbReference type="HAMAP-Rule" id="MF_00564"/>
    </source>
</evidence>
<accession>Q83EL9</accession>
<name>RNPH_COXBU</name>
<feature type="chain" id="PRO_0000139886" description="Ribonuclease PH">
    <location>
        <begin position="1"/>
        <end position="239"/>
    </location>
</feature>
<feature type="binding site" evidence="1">
    <location>
        <position position="88"/>
    </location>
    <ligand>
        <name>phosphate</name>
        <dbReference type="ChEBI" id="CHEBI:43474"/>
        <note>substrate</note>
    </ligand>
</feature>
<feature type="binding site" evidence="1">
    <location>
        <begin position="126"/>
        <end position="128"/>
    </location>
    <ligand>
        <name>phosphate</name>
        <dbReference type="ChEBI" id="CHEBI:43474"/>
        <note>substrate</note>
    </ligand>
</feature>
<dbReference type="EC" id="2.7.7.56" evidence="1"/>
<dbReference type="EMBL" id="AE016828">
    <property type="protein sequence ID" value="AAO89856.2"/>
    <property type="molecule type" value="Genomic_DNA"/>
</dbReference>
<dbReference type="RefSeq" id="NP_819342.2">
    <property type="nucleotide sequence ID" value="NC_002971.3"/>
</dbReference>
<dbReference type="SMR" id="Q83EL9"/>
<dbReference type="STRING" id="227377.CBU_0299"/>
<dbReference type="DNASU" id="1208181"/>
<dbReference type="EnsemblBacteria" id="AAO89856">
    <property type="protein sequence ID" value="AAO89856"/>
    <property type="gene ID" value="CBU_0299"/>
</dbReference>
<dbReference type="GeneID" id="1208181"/>
<dbReference type="KEGG" id="cbu:CBU_0299"/>
<dbReference type="PATRIC" id="fig|227377.7.peg.294"/>
<dbReference type="eggNOG" id="COG0689">
    <property type="taxonomic scope" value="Bacteria"/>
</dbReference>
<dbReference type="HOGENOM" id="CLU_050858_0_0_6"/>
<dbReference type="OrthoDB" id="9802265at2"/>
<dbReference type="Proteomes" id="UP000002671">
    <property type="component" value="Chromosome"/>
</dbReference>
<dbReference type="GO" id="GO:0000175">
    <property type="term" value="F:3'-5'-RNA exonuclease activity"/>
    <property type="evidence" value="ECO:0007669"/>
    <property type="project" value="UniProtKB-UniRule"/>
</dbReference>
<dbReference type="GO" id="GO:0003723">
    <property type="term" value="F:RNA binding"/>
    <property type="evidence" value="ECO:0000318"/>
    <property type="project" value="GO_Central"/>
</dbReference>
<dbReference type="GO" id="GO:0000049">
    <property type="term" value="F:tRNA binding"/>
    <property type="evidence" value="ECO:0007669"/>
    <property type="project" value="UniProtKB-UniRule"/>
</dbReference>
<dbReference type="GO" id="GO:0009022">
    <property type="term" value="F:tRNA nucleotidyltransferase activity"/>
    <property type="evidence" value="ECO:0007669"/>
    <property type="project" value="UniProtKB-UniRule"/>
</dbReference>
<dbReference type="GO" id="GO:0016075">
    <property type="term" value="P:rRNA catabolic process"/>
    <property type="evidence" value="ECO:0000318"/>
    <property type="project" value="GO_Central"/>
</dbReference>
<dbReference type="GO" id="GO:0006364">
    <property type="term" value="P:rRNA processing"/>
    <property type="evidence" value="ECO:0007669"/>
    <property type="project" value="UniProtKB-KW"/>
</dbReference>
<dbReference type="GO" id="GO:0008033">
    <property type="term" value="P:tRNA processing"/>
    <property type="evidence" value="ECO:0007669"/>
    <property type="project" value="UniProtKB-UniRule"/>
</dbReference>
<dbReference type="CDD" id="cd11362">
    <property type="entry name" value="RNase_PH_bact"/>
    <property type="match status" value="1"/>
</dbReference>
<dbReference type="FunFam" id="3.30.230.70:FF:000003">
    <property type="entry name" value="Ribonuclease PH"/>
    <property type="match status" value="1"/>
</dbReference>
<dbReference type="Gene3D" id="3.30.230.70">
    <property type="entry name" value="GHMP Kinase, N-terminal domain"/>
    <property type="match status" value="1"/>
</dbReference>
<dbReference type="HAMAP" id="MF_00564">
    <property type="entry name" value="RNase_PH"/>
    <property type="match status" value="1"/>
</dbReference>
<dbReference type="InterPro" id="IPR001247">
    <property type="entry name" value="ExoRNase_PH_dom1"/>
</dbReference>
<dbReference type="InterPro" id="IPR015847">
    <property type="entry name" value="ExoRNase_PH_dom2"/>
</dbReference>
<dbReference type="InterPro" id="IPR036345">
    <property type="entry name" value="ExoRNase_PH_dom2_sf"/>
</dbReference>
<dbReference type="InterPro" id="IPR027408">
    <property type="entry name" value="PNPase/RNase_PH_dom_sf"/>
</dbReference>
<dbReference type="InterPro" id="IPR020568">
    <property type="entry name" value="Ribosomal_Su5_D2-typ_SF"/>
</dbReference>
<dbReference type="InterPro" id="IPR050080">
    <property type="entry name" value="RNase_PH"/>
</dbReference>
<dbReference type="InterPro" id="IPR002381">
    <property type="entry name" value="RNase_PH_bac-type"/>
</dbReference>
<dbReference type="InterPro" id="IPR018336">
    <property type="entry name" value="RNase_PH_CS"/>
</dbReference>
<dbReference type="NCBIfam" id="TIGR01966">
    <property type="entry name" value="RNasePH"/>
    <property type="match status" value="1"/>
</dbReference>
<dbReference type="PANTHER" id="PTHR11953">
    <property type="entry name" value="EXOSOME COMPLEX COMPONENT"/>
    <property type="match status" value="1"/>
</dbReference>
<dbReference type="PANTHER" id="PTHR11953:SF0">
    <property type="entry name" value="EXOSOME COMPLEX COMPONENT RRP41"/>
    <property type="match status" value="1"/>
</dbReference>
<dbReference type="Pfam" id="PF01138">
    <property type="entry name" value="RNase_PH"/>
    <property type="match status" value="1"/>
</dbReference>
<dbReference type="Pfam" id="PF03725">
    <property type="entry name" value="RNase_PH_C"/>
    <property type="match status" value="1"/>
</dbReference>
<dbReference type="SUPFAM" id="SSF55666">
    <property type="entry name" value="Ribonuclease PH domain 2-like"/>
    <property type="match status" value="1"/>
</dbReference>
<dbReference type="SUPFAM" id="SSF54211">
    <property type="entry name" value="Ribosomal protein S5 domain 2-like"/>
    <property type="match status" value="1"/>
</dbReference>
<dbReference type="PROSITE" id="PS01277">
    <property type="entry name" value="RIBONUCLEASE_PH"/>
    <property type="match status" value="1"/>
</dbReference>
<proteinExistence type="inferred from homology"/>